<protein>
    <recommendedName>
        <fullName evidence="6">GTP-binding protein drn-1</fullName>
    </recommendedName>
    <alternativeName>
        <fullName evidence="5">Di-Ras/Rig/Noey2 Ras-like protein homolog</fullName>
    </alternativeName>
</protein>
<dbReference type="EMBL" id="BX284602">
    <property type="protein sequence ID" value="CCD68002.2"/>
    <property type="molecule type" value="Genomic_DNA"/>
</dbReference>
<dbReference type="PIR" id="T15833">
    <property type="entry name" value="T15833"/>
</dbReference>
<dbReference type="RefSeq" id="NP_001333544.1">
    <property type="nucleotide sequence ID" value="NM_001346628.1"/>
</dbReference>
<dbReference type="SMR" id="Q09930"/>
<dbReference type="FunCoup" id="Q09930">
    <property type="interactions" value="739"/>
</dbReference>
<dbReference type="STRING" id="6239.C54A12.4.1"/>
<dbReference type="PaxDb" id="6239-C54A12.4.1"/>
<dbReference type="PeptideAtlas" id="Q09930"/>
<dbReference type="EnsemblMetazoa" id="C54A12.4.1">
    <property type="protein sequence ID" value="C54A12.4.1"/>
    <property type="gene ID" value="WBGene00016911"/>
</dbReference>
<dbReference type="GeneID" id="183765"/>
<dbReference type="KEGG" id="cel:CELE_C54A12.4"/>
<dbReference type="UCSC" id="C54A12.4">
    <property type="organism name" value="c. elegans"/>
</dbReference>
<dbReference type="AGR" id="WB:WBGene00016911"/>
<dbReference type="CTD" id="183765"/>
<dbReference type="WormBase" id="C54A12.4">
    <property type="protein sequence ID" value="CE51761"/>
    <property type="gene ID" value="WBGene00016911"/>
    <property type="gene designation" value="drn-1"/>
</dbReference>
<dbReference type="eggNOG" id="KOG0395">
    <property type="taxonomic scope" value="Eukaryota"/>
</dbReference>
<dbReference type="GeneTree" id="ENSGT00940000176101"/>
<dbReference type="HOGENOM" id="CLU_041217_9_10_1"/>
<dbReference type="InParanoid" id="Q09930"/>
<dbReference type="OrthoDB" id="265044at2759"/>
<dbReference type="PhylomeDB" id="Q09930"/>
<dbReference type="PRO" id="PR:Q09930"/>
<dbReference type="Proteomes" id="UP000001940">
    <property type="component" value="Chromosome II"/>
</dbReference>
<dbReference type="Bgee" id="WBGene00016911">
    <property type="expression patterns" value="Expressed in larva and 3 other cell types or tissues"/>
</dbReference>
<dbReference type="GO" id="GO:0005886">
    <property type="term" value="C:plasma membrane"/>
    <property type="evidence" value="ECO:0000318"/>
    <property type="project" value="GO_Central"/>
</dbReference>
<dbReference type="GO" id="GO:0019003">
    <property type="term" value="F:GDP binding"/>
    <property type="evidence" value="ECO:0000318"/>
    <property type="project" value="GO_Central"/>
</dbReference>
<dbReference type="GO" id="GO:0005525">
    <property type="term" value="F:GTP binding"/>
    <property type="evidence" value="ECO:0000318"/>
    <property type="project" value="GO_Central"/>
</dbReference>
<dbReference type="GO" id="GO:0003924">
    <property type="term" value="F:GTPase activity"/>
    <property type="evidence" value="ECO:0000318"/>
    <property type="project" value="GO_Central"/>
</dbReference>
<dbReference type="GO" id="GO:0007165">
    <property type="term" value="P:signal transduction"/>
    <property type="evidence" value="ECO:0007669"/>
    <property type="project" value="InterPro"/>
</dbReference>
<dbReference type="FunFam" id="3.40.50.300:FF:000303">
    <property type="entry name" value="GTP-binding protein Di-Ras2"/>
    <property type="match status" value="1"/>
</dbReference>
<dbReference type="Gene3D" id="3.40.50.300">
    <property type="entry name" value="P-loop containing nucleotide triphosphate hydrolases"/>
    <property type="match status" value="1"/>
</dbReference>
<dbReference type="InterPro" id="IPR027417">
    <property type="entry name" value="P-loop_NTPase"/>
</dbReference>
<dbReference type="InterPro" id="IPR005225">
    <property type="entry name" value="Small_GTP-bd"/>
</dbReference>
<dbReference type="InterPro" id="IPR001806">
    <property type="entry name" value="Small_GTPase"/>
</dbReference>
<dbReference type="InterPro" id="IPR020849">
    <property type="entry name" value="Small_GTPase_Ras-type"/>
</dbReference>
<dbReference type="NCBIfam" id="TIGR00231">
    <property type="entry name" value="small_GTP"/>
    <property type="match status" value="1"/>
</dbReference>
<dbReference type="PANTHER" id="PTHR24070">
    <property type="entry name" value="RAS, DI-RAS, AND RHEB FAMILY MEMBERS OF SMALL GTPASE SUPERFAMILY"/>
    <property type="match status" value="1"/>
</dbReference>
<dbReference type="Pfam" id="PF00071">
    <property type="entry name" value="Ras"/>
    <property type="match status" value="1"/>
</dbReference>
<dbReference type="PRINTS" id="PR00449">
    <property type="entry name" value="RASTRNSFRMNG"/>
</dbReference>
<dbReference type="SMART" id="SM00175">
    <property type="entry name" value="RAB"/>
    <property type="match status" value="1"/>
</dbReference>
<dbReference type="SMART" id="SM00173">
    <property type="entry name" value="RAS"/>
    <property type="match status" value="1"/>
</dbReference>
<dbReference type="SMART" id="SM00174">
    <property type="entry name" value="RHO"/>
    <property type="match status" value="1"/>
</dbReference>
<dbReference type="SUPFAM" id="SSF52540">
    <property type="entry name" value="P-loop containing nucleoside triphosphate hydrolases"/>
    <property type="match status" value="1"/>
</dbReference>
<dbReference type="PROSITE" id="PS51421">
    <property type="entry name" value="RAS"/>
    <property type="match status" value="1"/>
</dbReference>
<comment type="function">
    <text evidence="2 4">Displays low GTPase activity and exists predominantly in the GTP-bound form (By similarity). Together with epac-1, may regulate acetylcholine release at the neuromuscular junctions probably downstream of G-protein gsa-1 and adenylate cyclase acy-1 (PubMed:22897658).</text>
</comment>
<comment type="subunit">
    <text evidence="4">Interacts with epac-1 (via C-terminus).</text>
</comment>
<comment type="subcellular location">
    <subcellularLocation>
        <location evidence="6">Cell membrane</location>
        <topology evidence="6">Lipid-anchor</topology>
        <orientation evidence="6">Cytoplasmic side</orientation>
    </subcellularLocation>
</comment>
<comment type="tissue specificity">
    <text evidence="4">Expressed specifically in neurons including the nerve ring, ventral and dorsal nerve cord motor neurons and tail ganglia.</text>
</comment>
<comment type="disruption phenotype">
    <text evidence="4">Viable and fertile. Resistant to paralysis induced by treatment with acetylcholinesterase inhibitor aldicarb (but not with acetylcholine agonist levamisole). Hypersensitivity to aldicarb treatment is partially reduced in an egl-30(js126), goa-1(n1134) or gsa-1(ce94) mutant background.</text>
</comment>
<comment type="similarity">
    <text evidence="6">Belongs to the small GTPase superfamily. Di-Ras family.</text>
</comment>
<keyword id="KW-1003">Cell membrane</keyword>
<keyword id="KW-0342">GTP-binding</keyword>
<keyword id="KW-0449">Lipoprotein</keyword>
<keyword id="KW-0472">Membrane</keyword>
<keyword id="KW-0488">Methylation</keyword>
<keyword id="KW-0547">Nucleotide-binding</keyword>
<keyword id="KW-0636">Prenylation</keyword>
<keyword id="KW-1185">Reference proteome</keyword>
<reference evidence="7" key="1">
    <citation type="journal article" date="1998" name="Science">
        <title>Genome sequence of the nematode C. elegans: a platform for investigating biology.</title>
        <authorList>
            <consortium name="The C. elegans sequencing consortium"/>
        </authorList>
    </citation>
    <scope>NUCLEOTIDE SEQUENCE [LARGE SCALE GENOMIC DNA]</scope>
    <source>
        <strain>Bristol N2</strain>
    </source>
</reference>
<reference evidence="6" key="2">
    <citation type="journal article" date="2012" name="Genes Cells">
        <title>Neuronally expressed Ras-family GTPase Di-Ras modulates synaptic activity in Caenorhabditis elegans.</title>
        <authorList>
            <person name="Tada M."/>
            <person name="Gengyo-Ando K."/>
            <person name="Kobayashi T."/>
            <person name="Fukuyama M."/>
            <person name="Mitani S."/>
            <person name="Kontani K."/>
            <person name="Katada T."/>
        </authorList>
    </citation>
    <scope>FUNCTION</scope>
    <scope>INTERACTION WITH EPAC-1</scope>
    <scope>TISSUE SPECIFICITY</scope>
    <scope>DISRUPTION PHENOTYPE</scope>
    <scope>MUTAGENESIS OF GLY-40 AND SER-45</scope>
</reference>
<gene>
    <name evidence="8" type="primary">drn-1</name>
    <name evidence="8" type="ORF">C54A12.4</name>
</gene>
<organism evidence="7">
    <name type="scientific">Caenorhabditis elegans</name>
    <dbReference type="NCBI Taxonomy" id="6239"/>
    <lineage>
        <taxon>Eukaryota</taxon>
        <taxon>Metazoa</taxon>
        <taxon>Ecdysozoa</taxon>
        <taxon>Nematoda</taxon>
        <taxon>Chromadorea</taxon>
        <taxon>Rhabditida</taxon>
        <taxon>Rhabditina</taxon>
        <taxon>Rhabditomorpha</taxon>
        <taxon>Rhabditoidea</taxon>
        <taxon>Rhabditidae</taxon>
        <taxon>Peloderinae</taxon>
        <taxon>Caenorhabditis</taxon>
    </lineage>
</organism>
<proteinExistence type="evidence at protein level"/>
<accession>Q09930</accession>
<evidence type="ECO:0000250" key="1">
    <source>
        <dbReference type="UniProtKB" id="P62330"/>
    </source>
</evidence>
<evidence type="ECO:0000250" key="2">
    <source>
        <dbReference type="UniProtKB" id="Q96HU8"/>
    </source>
</evidence>
<evidence type="ECO:0000255" key="3"/>
<evidence type="ECO:0000269" key="4">
    <source>
    </source>
</evidence>
<evidence type="ECO:0000303" key="5">
    <source>
    </source>
</evidence>
<evidence type="ECO:0000305" key="6"/>
<evidence type="ECO:0000312" key="7">
    <source>
        <dbReference type="Proteomes" id="UP000001940"/>
    </source>
</evidence>
<evidence type="ECO:0000312" key="8">
    <source>
        <dbReference type="WormBase" id="C54A12.4"/>
    </source>
</evidence>
<name>DIRA_CAEEL</name>
<sequence>LLDTDFSIEATAATTTAGSGSKVAEASTSDYRVAVFGAGGVGKSSITQRFVKGTFNENYVPTIEDTYRQVISCNQKNVCTLQITDTTGSHQFPAMQRLSISKGNAFILIYSVTNKQSFAELVPIIEMMKEVKGNAIAETPIMLVGNKKDEESKREVSSNSGQKVATNMECGFIETSAKNNENITELFQQLLALEKKRQLALTMDDPDGKNGKKKGCHIM</sequence>
<feature type="chain" id="PRO_0000438305" description="GTP-binding protein drn-1" evidence="6">
    <location>
        <begin position="1" status="less than"/>
        <end position="216"/>
    </location>
</feature>
<feature type="propeptide" id="PRO_0000438306" description="Removed in mature form" evidence="3">
    <location>
        <begin position="217"/>
        <end position="219"/>
    </location>
</feature>
<feature type="short sequence motif" description="Effector region" evidence="3">
    <location>
        <begin position="59"/>
        <end position="67"/>
    </location>
</feature>
<feature type="binding site" evidence="2">
    <location>
        <begin position="37"/>
        <end position="44"/>
    </location>
    <ligand>
        <name>GTP</name>
        <dbReference type="ChEBI" id="CHEBI:37565"/>
    </ligand>
</feature>
<feature type="binding site" evidence="2">
    <location>
        <begin position="56"/>
        <end position="62"/>
    </location>
    <ligand>
        <name>GTP</name>
        <dbReference type="ChEBI" id="CHEBI:37565"/>
    </ligand>
</feature>
<feature type="binding site" evidence="2">
    <location>
        <begin position="85"/>
        <end position="89"/>
    </location>
    <ligand>
        <name>GTP</name>
        <dbReference type="ChEBI" id="CHEBI:37565"/>
    </ligand>
</feature>
<feature type="binding site" evidence="2">
    <location>
        <begin position="146"/>
        <end position="149"/>
    </location>
    <ligand>
        <name>GTP</name>
        <dbReference type="ChEBI" id="CHEBI:37565"/>
    </ligand>
</feature>
<feature type="binding site" evidence="2">
    <location>
        <begin position="177"/>
        <end position="178"/>
    </location>
    <ligand>
        <name>GTP</name>
        <dbReference type="ChEBI" id="CHEBI:37565"/>
    </ligand>
</feature>
<feature type="modified residue" description="Cysteine methyl ester" evidence="3">
    <location>
        <position position="216"/>
    </location>
</feature>
<feature type="lipid moiety-binding region" description="S-geranylgeranyl cysteine" evidence="1">
    <location>
        <position position="216"/>
    </location>
</feature>
<feature type="mutagenesis site" description="Probably constitutively active. Does not reduce paralysis induced by aldicarb treatment." evidence="4">
    <original>G</original>
    <variation>V</variation>
    <location>
        <position position="40"/>
    </location>
</feature>
<feature type="mutagenesis site" description="Probably nucleotide-free or GDP-bound. Reduces paralysis induced by aldicarb treatment." evidence="4">
    <original>S</original>
    <variation>N</variation>
    <location>
        <position position="45"/>
    </location>
</feature>
<feature type="non-terminal residue" evidence="6">
    <location>
        <position position="1"/>
    </location>
</feature>